<reference key="1">
    <citation type="journal article" date="2008" name="PLoS ONE">
        <title>Genome biology of Actinobacillus pleuropneumoniae JL03, an isolate of serotype 3 prevalent in China.</title>
        <authorList>
            <person name="Xu Z."/>
            <person name="Zhou Y."/>
            <person name="Li L."/>
            <person name="Zhou R."/>
            <person name="Xiao S."/>
            <person name="Wan Y."/>
            <person name="Zhang S."/>
            <person name="Wang K."/>
            <person name="Li W."/>
            <person name="Li L."/>
            <person name="Jin H."/>
            <person name="Kang M."/>
            <person name="Dalai B."/>
            <person name="Li T."/>
            <person name="Liu L."/>
            <person name="Cheng Y."/>
            <person name="Zhang L."/>
            <person name="Xu T."/>
            <person name="Zheng H."/>
            <person name="Pu S."/>
            <person name="Wang B."/>
            <person name="Gu W."/>
            <person name="Zhang X.L."/>
            <person name="Zhu G.-F."/>
            <person name="Wang S."/>
            <person name="Zhao G.-P."/>
            <person name="Chen H."/>
        </authorList>
    </citation>
    <scope>NUCLEOTIDE SEQUENCE [LARGE SCALE GENOMIC DNA]</scope>
    <source>
        <strain>JL03</strain>
    </source>
</reference>
<gene>
    <name evidence="1" type="primary">pyrE</name>
    <name type="ordered locus">APJL_0333</name>
</gene>
<protein>
    <recommendedName>
        <fullName evidence="1">Orotate phosphoribosyltransferase</fullName>
        <shortName evidence="1">OPRT</shortName>
        <shortName evidence="1">OPRTase</shortName>
        <ecNumber evidence="1">2.4.2.10</ecNumber>
    </recommendedName>
</protein>
<feature type="chain" id="PRO_1000138758" description="Orotate phosphoribosyltransferase">
    <location>
        <begin position="1"/>
        <end position="213"/>
    </location>
</feature>
<feature type="binding site" description="in other chain" evidence="1">
    <location>
        <position position="26"/>
    </location>
    <ligand>
        <name>5-phospho-alpha-D-ribose 1-diphosphate</name>
        <dbReference type="ChEBI" id="CHEBI:58017"/>
        <note>ligand shared between dimeric partners</note>
    </ligand>
</feature>
<feature type="binding site" evidence="1">
    <location>
        <begin position="34"/>
        <end position="35"/>
    </location>
    <ligand>
        <name>orotate</name>
        <dbReference type="ChEBI" id="CHEBI:30839"/>
    </ligand>
</feature>
<feature type="binding site" description="in other chain" evidence="1">
    <location>
        <begin position="72"/>
        <end position="73"/>
    </location>
    <ligand>
        <name>5-phospho-alpha-D-ribose 1-diphosphate</name>
        <dbReference type="ChEBI" id="CHEBI:58017"/>
        <note>ligand shared between dimeric partners</note>
    </ligand>
</feature>
<feature type="binding site" evidence="1">
    <location>
        <position position="99"/>
    </location>
    <ligand>
        <name>5-phospho-alpha-D-ribose 1-diphosphate</name>
        <dbReference type="ChEBI" id="CHEBI:58017"/>
        <note>ligand shared between dimeric partners</note>
    </ligand>
</feature>
<feature type="binding site" description="in other chain" evidence="1">
    <location>
        <position position="100"/>
    </location>
    <ligand>
        <name>5-phospho-alpha-D-ribose 1-diphosphate</name>
        <dbReference type="ChEBI" id="CHEBI:58017"/>
        <note>ligand shared between dimeric partners</note>
    </ligand>
</feature>
<feature type="binding site" evidence="1">
    <location>
        <position position="103"/>
    </location>
    <ligand>
        <name>5-phospho-alpha-D-ribose 1-diphosphate</name>
        <dbReference type="ChEBI" id="CHEBI:58017"/>
        <note>ligand shared between dimeric partners</note>
    </ligand>
</feature>
<feature type="binding site" evidence="1">
    <location>
        <position position="105"/>
    </location>
    <ligand>
        <name>5-phospho-alpha-D-ribose 1-diphosphate</name>
        <dbReference type="ChEBI" id="CHEBI:58017"/>
        <note>ligand shared between dimeric partners</note>
    </ligand>
</feature>
<feature type="binding site" description="in other chain" evidence="1">
    <location>
        <begin position="124"/>
        <end position="132"/>
    </location>
    <ligand>
        <name>5-phospho-alpha-D-ribose 1-diphosphate</name>
        <dbReference type="ChEBI" id="CHEBI:58017"/>
        <note>ligand shared between dimeric partners</note>
    </ligand>
</feature>
<feature type="binding site" evidence="1">
    <location>
        <position position="128"/>
    </location>
    <ligand>
        <name>orotate</name>
        <dbReference type="ChEBI" id="CHEBI:30839"/>
    </ligand>
</feature>
<feature type="binding site" evidence="1">
    <location>
        <position position="156"/>
    </location>
    <ligand>
        <name>orotate</name>
        <dbReference type="ChEBI" id="CHEBI:30839"/>
    </ligand>
</feature>
<proteinExistence type="inferred from homology"/>
<comment type="function">
    <text evidence="1">Catalyzes the transfer of a ribosyl phosphate group from 5-phosphoribose 1-diphosphate to orotate, leading to the formation of orotidine monophosphate (OMP).</text>
</comment>
<comment type="catalytic activity">
    <reaction evidence="1">
        <text>orotidine 5'-phosphate + diphosphate = orotate + 5-phospho-alpha-D-ribose 1-diphosphate</text>
        <dbReference type="Rhea" id="RHEA:10380"/>
        <dbReference type="ChEBI" id="CHEBI:30839"/>
        <dbReference type="ChEBI" id="CHEBI:33019"/>
        <dbReference type="ChEBI" id="CHEBI:57538"/>
        <dbReference type="ChEBI" id="CHEBI:58017"/>
        <dbReference type="EC" id="2.4.2.10"/>
    </reaction>
</comment>
<comment type="cofactor">
    <cofactor evidence="1">
        <name>Mg(2+)</name>
        <dbReference type="ChEBI" id="CHEBI:18420"/>
    </cofactor>
</comment>
<comment type="pathway">
    <text evidence="1">Pyrimidine metabolism; UMP biosynthesis via de novo pathway; UMP from orotate: step 1/2.</text>
</comment>
<comment type="subunit">
    <text evidence="1">Homodimer.</text>
</comment>
<comment type="similarity">
    <text evidence="1">Belongs to the purine/pyrimidine phosphoribosyltransferase family. PyrE subfamily.</text>
</comment>
<organism>
    <name type="scientific">Actinobacillus pleuropneumoniae serotype 3 (strain JL03)</name>
    <dbReference type="NCBI Taxonomy" id="434271"/>
    <lineage>
        <taxon>Bacteria</taxon>
        <taxon>Pseudomonadati</taxon>
        <taxon>Pseudomonadota</taxon>
        <taxon>Gammaproteobacteria</taxon>
        <taxon>Pasteurellales</taxon>
        <taxon>Pasteurellaceae</taxon>
        <taxon>Actinobacillus</taxon>
    </lineage>
</organism>
<evidence type="ECO:0000255" key="1">
    <source>
        <dbReference type="HAMAP-Rule" id="MF_01208"/>
    </source>
</evidence>
<name>PYRE_ACTPJ</name>
<sequence>MEQYKHDFIEFALSRNVLKFGEFTLKSGRKSPYFFNAGLFNTGRDLAKLGEFYAQAIQASGLNFDVLFGPAYKGIPIATTVAVALVNQFDVDKPCCFNRKEAKDHGEGGNLIGSPLKGRILLVDDVITAGTAIRESMEIINANQAELAGVLIALNRKEKGKGELSAIQEVERDYGCQVFSIIDFDDLIQFIEKSEQYAPYLASMRAYREQYGV</sequence>
<accession>B0BT67</accession>
<dbReference type="EC" id="2.4.2.10" evidence="1"/>
<dbReference type="EMBL" id="CP000687">
    <property type="protein sequence ID" value="ABY68924.1"/>
    <property type="molecule type" value="Genomic_DNA"/>
</dbReference>
<dbReference type="RefSeq" id="WP_005596245.1">
    <property type="nucleotide sequence ID" value="NC_010278.1"/>
</dbReference>
<dbReference type="SMR" id="B0BT67"/>
<dbReference type="GeneID" id="48598473"/>
<dbReference type="KEGG" id="apj:APJL_0333"/>
<dbReference type="HOGENOM" id="CLU_074878_0_1_6"/>
<dbReference type="UniPathway" id="UPA00070">
    <property type="reaction ID" value="UER00119"/>
</dbReference>
<dbReference type="Proteomes" id="UP000008547">
    <property type="component" value="Chromosome"/>
</dbReference>
<dbReference type="GO" id="GO:0005737">
    <property type="term" value="C:cytoplasm"/>
    <property type="evidence" value="ECO:0007669"/>
    <property type="project" value="TreeGrafter"/>
</dbReference>
<dbReference type="GO" id="GO:0000287">
    <property type="term" value="F:magnesium ion binding"/>
    <property type="evidence" value="ECO:0007669"/>
    <property type="project" value="UniProtKB-UniRule"/>
</dbReference>
<dbReference type="GO" id="GO:0004588">
    <property type="term" value="F:orotate phosphoribosyltransferase activity"/>
    <property type="evidence" value="ECO:0007669"/>
    <property type="project" value="UniProtKB-UniRule"/>
</dbReference>
<dbReference type="GO" id="GO:0006207">
    <property type="term" value="P:'de novo' pyrimidine nucleobase biosynthetic process"/>
    <property type="evidence" value="ECO:0007669"/>
    <property type="project" value="TreeGrafter"/>
</dbReference>
<dbReference type="GO" id="GO:0044205">
    <property type="term" value="P:'de novo' UMP biosynthetic process"/>
    <property type="evidence" value="ECO:0007669"/>
    <property type="project" value="UniProtKB-UniRule"/>
</dbReference>
<dbReference type="GO" id="GO:0046132">
    <property type="term" value="P:pyrimidine ribonucleoside biosynthetic process"/>
    <property type="evidence" value="ECO:0007669"/>
    <property type="project" value="TreeGrafter"/>
</dbReference>
<dbReference type="CDD" id="cd06223">
    <property type="entry name" value="PRTases_typeI"/>
    <property type="match status" value="1"/>
</dbReference>
<dbReference type="FunFam" id="3.40.50.2020:FF:000008">
    <property type="entry name" value="Orotate phosphoribosyltransferase"/>
    <property type="match status" value="1"/>
</dbReference>
<dbReference type="Gene3D" id="3.40.50.2020">
    <property type="match status" value="1"/>
</dbReference>
<dbReference type="HAMAP" id="MF_01208">
    <property type="entry name" value="PyrE"/>
    <property type="match status" value="1"/>
</dbReference>
<dbReference type="InterPro" id="IPR023031">
    <property type="entry name" value="OPRT"/>
</dbReference>
<dbReference type="InterPro" id="IPR004467">
    <property type="entry name" value="Or_phspho_trans_dom"/>
</dbReference>
<dbReference type="InterPro" id="IPR000836">
    <property type="entry name" value="PRibTrfase_dom"/>
</dbReference>
<dbReference type="InterPro" id="IPR029057">
    <property type="entry name" value="PRTase-like"/>
</dbReference>
<dbReference type="NCBIfam" id="TIGR00336">
    <property type="entry name" value="pyrE"/>
    <property type="match status" value="1"/>
</dbReference>
<dbReference type="PANTHER" id="PTHR46683">
    <property type="entry name" value="OROTATE PHOSPHORIBOSYLTRANSFERASE 1-RELATED"/>
    <property type="match status" value="1"/>
</dbReference>
<dbReference type="PANTHER" id="PTHR46683:SF1">
    <property type="entry name" value="OROTATE PHOSPHORIBOSYLTRANSFERASE 1-RELATED"/>
    <property type="match status" value="1"/>
</dbReference>
<dbReference type="Pfam" id="PF00156">
    <property type="entry name" value="Pribosyltran"/>
    <property type="match status" value="1"/>
</dbReference>
<dbReference type="SUPFAM" id="SSF53271">
    <property type="entry name" value="PRTase-like"/>
    <property type="match status" value="1"/>
</dbReference>
<dbReference type="PROSITE" id="PS00103">
    <property type="entry name" value="PUR_PYR_PR_TRANSFER"/>
    <property type="match status" value="1"/>
</dbReference>
<keyword id="KW-0328">Glycosyltransferase</keyword>
<keyword id="KW-0460">Magnesium</keyword>
<keyword id="KW-0665">Pyrimidine biosynthesis</keyword>
<keyword id="KW-0808">Transferase</keyword>